<gene>
    <name type="primary">BIRC5</name>
</gene>
<name>BIRC5_CANLF</name>
<evidence type="ECO:0000250" key="1">
    <source>
        <dbReference type="UniProtKB" id="E3SCZ8"/>
    </source>
</evidence>
<evidence type="ECO:0000250" key="2">
    <source>
        <dbReference type="UniProtKB" id="O15392"/>
    </source>
</evidence>
<evidence type="ECO:0000255" key="3">
    <source>
        <dbReference type="PROSITE-ProRule" id="PRU00029"/>
    </source>
</evidence>
<evidence type="ECO:0000305" key="4"/>
<accession>Q8I009</accession>
<accession>Q5XPZ7</accession>
<accession>Q6L673</accession>
<reference key="1">
    <citation type="submission" date="2004-05" db="EMBL/GenBank/DDBJ databases">
        <title>Expression of the survivin gene in dog neoplasm.</title>
        <authorList>
            <person name="Uchide T."/>
        </authorList>
    </citation>
    <scope>NUCLEOTIDE SEQUENCE [MRNA]</scope>
</reference>
<reference key="2">
    <citation type="submission" date="2004-09" db="EMBL/GenBank/DDBJ databases">
        <title>Cloning of canine survivin cDNA sequence.</title>
        <authorList>
            <person name="Scase T.J."/>
            <person name="Lamb E.R."/>
        </authorList>
    </citation>
    <scope>NUCLEOTIDE SEQUENCE [MRNA]</scope>
</reference>
<keyword id="KW-0007">Acetylation</keyword>
<keyword id="KW-0053">Apoptosis</keyword>
<keyword id="KW-0131">Cell cycle</keyword>
<keyword id="KW-0132">Cell division</keyword>
<keyword id="KW-0137">Centromere</keyword>
<keyword id="KW-0158">Chromosome</keyword>
<keyword id="KW-0159">Chromosome partition</keyword>
<keyword id="KW-0963">Cytoplasm</keyword>
<keyword id="KW-0206">Cytoskeleton</keyword>
<keyword id="KW-0995">Kinetochore</keyword>
<keyword id="KW-0479">Metal-binding</keyword>
<keyword id="KW-0493">Microtubule</keyword>
<keyword id="KW-0498">Mitosis</keyword>
<keyword id="KW-0539">Nucleus</keyword>
<keyword id="KW-0597">Phosphoprotein</keyword>
<keyword id="KW-0646">Protease inhibitor</keyword>
<keyword id="KW-1185">Reference proteome</keyword>
<keyword id="KW-0678">Repressor</keyword>
<keyword id="KW-0789">Thiol protease inhibitor</keyword>
<keyword id="KW-0804">Transcription</keyword>
<keyword id="KW-0805">Transcription regulation</keyword>
<keyword id="KW-0832">Ubl conjugation</keyword>
<keyword id="KW-0862">Zinc</keyword>
<feature type="chain" id="PRO_0000122355" description="Baculoviral IAP repeat-containing protein 5">
    <location>
        <begin position="1"/>
        <end position="142"/>
    </location>
</feature>
<feature type="repeat" description="BIR" evidence="4">
    <location>
        <begin position="18"/>
        <end position="88"/>
    </location>
</feature>
<feature type="binding site" evidence="2 3">
    <location>
        <position position="57"/>
    </location>
    <ligand>
        <name>Zn(2+)</name>
        <dbReference type="ChEBI" id="CHEBI:29105"/>
    </ligand>
</feature>
<feature type="binding site" evidence="2 3">
    <location>
        <position position="60"/>
    </location>
    <ligand>
        <name>Zn(2+)</name>
        <dbReference type="ChEBI" id="CHEBI:29105"/>
    </ligand>
</feature>
<feature type="binding site" evidence="2 3">
    <location>
        <position position="77"/>
    </location>
    <ligand>
        <name>Zn(2+)</name>
        <dbReference type="ChEBI" id="CHEBI:29105"/>
    </ligand>
</feature>
<feature type="binding site" evidence="2 3">
    <location>
        <position position="84"/>
    </location>
    <ligand>
        <name>Zn(2+)</name>
        <dbReference type="ChEBI" id="CHEBI:29105"/>
    </ligand>
</feature>
<feature type="site" description="Interaction with FBXL7" evidence="2">
    <location>
        <position position="126"/>
    </location>
</feature>
<feature type="modified residue" description="Phosphoserine; by AURKC" evidence="2">
    <location>
        <position position="20"/>
    </location>
</feature>
<feature type="modified residue" description="N6-acetyllysine" evidence="2">
    <location>
        <position position="23"/>
    </location>
</feature>
<feature type="modified residue" description="Phosphothreonine; by CDK1 and CDK15" evidence="2">
    <location>
        <position position="34"/>
    </location>
</feature>
<feature type="modified residue" description="Phosphothreonine" evidence="2">
    <location>
        <position position="48"/>
    </location>
</feature>
<feature type="modified residue" description="N6-acetyllysine" evidence="2">
    <location>
        <position position="90"/>
    </location>
</feature>
<feature type="modified residue" description="N6-acetyllysine" evidence="2">
    <location>
        <position position="110"/>
    </location>
</feature>
<feature type="modified residue" description="N6-acetyllysine" evidence="2">
    <location>
        <position position="112"/>
    </location>
</feature>
<feature type="modified residue" description="N6-acetyllysine" evidence="2">
    <location>
        <position position="115"/>
    </location>
</feature>
<feature type="modified residue" description="Phosphothreonine; by AURKB" evidence="2">
    <location>
        <position position="117"/>
    </location>
</feature>
<feature type="modified residue" description="N6-acetyllysine" evidence="2">
    <location>
        <position position="129"/>
    </location>
</feature>
<sequence>MGASSLPPAWQLYLKDHRVSTFKNWPFLEGCACTPDRMAEAGFIHCPTENEPDLAQCFFCFKELEGWEPDDDPIEEHKKHSSGCAFLSVKKQFEELTLSEFLKLDKERAKNKIAKETNNKQKEFEETAKKVRCAIEQLAAAE</sequence>
<proteinExistence type="evidence at transcript level"/>
<protein>
    <recommendedName>
        <fullName>Baculoviral IAP repeat-containing protein 5</fullName>
    </recommendedName>
    <alternativeName>
        <fullName>Apoptosis inhibitor survivin</fullName>
    </alternativeName>
</protein>
<comment type="function">
    <text evidence="2">Multitasking protein that has dual roles in promoting cell proliferation and preventing apoptosis (By similarity). Component of a chromosome passage protein complex (CPC) which is essential for chromosome alignment and segregation during mitosis and cytokinesis (By similarity). Acts as an important regulator of the localization of this complex; directs CPC movement to different locations from the inner centromere during prometaphase to midbody during cytokinesis and participates in the organization of the center spindle by associating with polymerized microtubules (By similarity). Involved in the recruitment of CPC to centromeres during early mitosis via association with histone H3 phosphorylated at 'Thr-3' (H3pT3) during mitosis (By similarity). The complex with RAN plays a role in mitotic spindle formation by serving as a physical scaffold to help deliver the RAN effector molecule TPX2 to microtubules (By similarity). May counteract a default induction of apoptosis in G2/M phase (By similarity). The acetylated form represses STAT3 transactivation of target gene promoters (By similarity). May play a role in neoplasia. Inhibitor of CASP3 and CASP7 (By similarity). Essential for the maintenance of mitochondrial integrity and function (By similarity).</text>
</comment>
<comment type="subunit">
    <text evidence="2">Monomer or homodimer. Exists as a homodimer in the apo state and as a monomer in the CPC-bound state. The monomer protects cells against apoptosis more efficiently than the dimer. Only the dimeric form is capable of enhancing tubulin stability in cells. When phosphorylated, interacts with LAMTOR5/HBXIP; the resulting complex binds pro-CASP9, as well as active CASP9, but much less efficiently. Component of the chromosomal passenger complex (CPC) composed of at least BIRC5/survivin, CDCA8/borealin, INCENP, AURKB or AURKC; in the complex forms a triple-helix bundle-based subcomplex with INCENP and CDCA8. Interacts with JTB. Interacts (via BIR domain) with histone H3 phosphorylated at 'Thr-3' (H3pT3). Interacts with EVI5. Interacts with GTP-bound RAN in both the S and M phases of the cell cycle. Interacts with USP9X. Interacts with tubulin. Interacts with BIRC2/c-IAP1. The acetylated form at Lys-129 interacts with STAT3. The monomeric form deacetylated at Lys-129 interacts with XPO1/CRM1. The monomeric form interacts with XIAP/BIRC4. Both the dimeric and monomeric form can interact with DIABLO/SMAC. Interacts with BIRC6/bruce. Interacts with FBXL7; this interaction facilitates the polyubiquitination and subsequent proteasomal degradation of BIRC5 by the SCF(FBXL7) E3 ubiquitin-protein ligase complex (By similarity).</text>
</comment>
<comment type="subcellular location">
    <subcellularLocation>
        <location evidence="2">Cytoplasm</location>
    </subcellularLocation>
    <subcellularLocation>
        <location evidence="2">Nucleus</location>
    </subcellularLocation>
    <subcellularLocation>
        <location evidence="2">Chromosome</location>
    </subcellularLocation>
    <subcellularLocation>
        <location evidence="2">Chromosome</location>
        <location evidence="2">Centromere</location>
    </subcellularLocation>
    <subcellularLocation>
        <location evidence="2">Cytoplasm</location>
        <location evidence="2">Cytoskeleton</location>
        <location evidence="2">Spindle</location>
    </subcellularLocation>
    <subcellularLocation>
        <location evidence="2">Chromosome</location>
        <location evidence="2">Centromere</location>
        <location evidence="2">Kinetochore</location>
    </subcellularLocation>
    <subcellularLocation>
        <location evidence="2">Midbody</location>
    </subcellularLocation>
    <text evidence="1 2">Localizes at the centromeres from prophase to metaphase, at the spindle midzone during anaphase and a the midbody during telophase and cytokinesis. Accumulates in the nucleus upon treatment with leptomycin B (LMB), a XPO1/CRM1 nuclear export inhibitor (By similarity). Localizes on chromosome arms and inner centromeres from prophase through metaphase. Localizes to kinetochores in metaphase, distributes to the midzone microtubules in anaphase and at telophase, localizes exclusively to the midbody. Colocalizes with AURKB at mitotic chromosomes. Acetylation at Lys-129 directs its localization to the nucleus by enhancing homodimerization and thereby inhibiting XPO1/CRM1-mediated nuclear export (By similarity).</text>
</comment>
<comment type="domain">
    <text evidence="2">The BIR repeat is necessary and sufficient for LAMTOR5 binding.</text>
</comment>
<comment type="PTM">
    <text evidence="2">Ubiquitinated by the Cul9-RING ubiquitin-protein ligase complex, leading to its degradation. Ubiquitination is required for centrosomal targeting. Deubiquitinated by USP35 or USP38; leading to stabilization.</text>
</comment>
<comment type="PTM">
    <text evidence="2">Acetylation at Lys-129 results in its homodimerization, while deacetylation promotes the formation of monomers which heterodimerize with XPO1/CRM1 which facilitates its nuclear export. The acetylated form represses STAT3 transactivation. The dynamic equilibrium between its acetylation and deacetylation at Lys-129 determines its interaction with XPO1/CRM1, its subsequent subcellular localization, and its ability to inhibit STAT3 transactivation.</text>
</comment>
<comment type="PTM">
    <text evidence="2">In vitro phosphorylation at Thr-117 by AURKB prevents interaction with INCENP and localization to mitotic chromosomes. Phosphorylation at Thr-48 by CK2 is critical for its mitotic and anti-apoptotic activities. Phosphorylation at Thr-34 by CDK15 is critical for its anti-apoptotic activity. Phosphorylation at Ser-20 by AURKC is critical for regulation of proper chromosome alignment and segregation, and possibly cytokinesis.</text>
</comment>
<comment type="similarity">
    <text evidence="4">Belongs to the IAP family.</text>
</comment>
<organism>
    <name type="scientific">Canis lupus familiaris</name>
    <name type="common">Dog</name>
    <name type="synonym">Canis familiaris</name>
    <dbReference type="NCBI Taxonomy" id="9615"/>
    <lineage>
        <taxon>Eukaryota</taxon>
        <taxon>Metazoa</taxon>
        <taxon>Chordata</taxon>
        <taxon>Craniata</taxon>
        <taxon>Vertebrata</taxon>
        <taxon>Euteleostomi</taxon>
        <taxon>Mammalia</taxon>
        <taxon>Eutheria</taxon>
        <taxon>Laurasiatheria</taxon>
        <taxon>Carnivora</taxon>
        <taxon>Caniformia</taxon>
        <taxon>Canidae</taxon>
        <taxon>Canis</taxon>
    </lineage>
</organism>
<dbReference type="EMBL" id="AB180206">
    <property type="protein sequence ID" value="BAD20570.1"/>
    <property type="molecule type" value="mRNA"/>
</dbReference>
<dbReference type="EMBL" id="AY741504">
    <property type="protein sequence ID" value="AAU89275.1"/>
    <property type="molecule type" value="mRNA"/>
</dbReference>
<dbReference type="RefSeq" id="NP_001003348.1">
    <property type="nucleotide sequence ID" value="NM_001003348.1"/>
</dbReference>
<dbReference type="SMR" id="Q8I009"/>
<dbReference type="FunCoup" id="Q8I009">
    <property type="interactions" value="712"/>
</dbReference>
<dbReference type="STRING" id="9615.ENSCAFP00000045531"/>
<dbReference type="MEROPS" id="I32.005"/>
<dbReference type="PaxDb" id="9612-ENSCAFP00000007914"/>
<dbReference type="GeneID" id="442936"/>
<dbReference type="KEGG" id="cfa:442936"/>
<dbReference type="CTD" id="332"/>
<dbReference type="eggNOG" id="KOG1101">
    <property type="taxonomic scope" value="Eukaryota"/>
</dbReference>
<dbReference type="HOGENOM" id="CLU_016347_0_1_1"/>
<dbReference type="InParanoid" id="Q8I009"/>
<dbReference type="OMA" id="IKMYFYE"/>
<dbReference type="OrthoDB" id="433474at2759"/>
<dbReference type="TreeFam" id="TF342652"/>
<dbReference type="Proteomes" id="UP000002254">
    <property type="component" value="Unplaced"/>
</dbReference>
<dbReference type="Proteomes" id="UP000694429">
    <property type="component" value="Unplaced"/>
</dbReference>
<dbReference type="Proteomes" id="UP000694542">
    <property type="component" value="Unplaced"/>
</dbReference>
<dbReference type="Proteomes" id="UP000805418">
    <property type="component" value="Unplaced"/>
</dbReference>
<dbReference type="GO" id="GO:0005814">
    <property type="term" value="C:centriole"/>
    <property type="evidence" value="ECO:0000250"/>
    <property type="project" value="UniProtKB"/>
</dbReference>
<dbReference type="GO" id="GO:0032133">
    <property type="term" value="C:chromosome passenger complex"/>
    <property type="evidence" value="ECO:0000250"/>
    <property type="project" value="UniProtKB"/>
</dbReference>
<dbReference type="GO" id="GO:0000775">
    <property type="term" value="C:chromosome, centromeric region"/>
    <property type="evidence" value="ECO:0000250"/>
    <property type="project" value="UniProtKB"/>
</dbReference>
<dbReference type="GO" id="GO:0005737">
    <property type="term" value="C:cytoplasm"/>
    <property type="evidence" value="ECO:0000250"/>
    <property type="project" value="UniProtKB"/>
</dbReference>
<dbReference type="GO" id="GO:0005881">
    <property type="term" value="C:cytoplasmic microtubule"/>
    <property type="evidence" value="ECO:0000250"/>
    <property type="project" value="UniProtKB"/>
</dbReference>
<dbReference type="GO" id="GO:0005829">
    <property type="term" value="C:cytosol"/>
    <property type="evidence" value="ECO:0000250"/>
    <property type="project" value="UniProtKB"/>
</dbReference>
<dbReference type="GO" id="GO:0031021">
    <property type="term" value="C:interphase microtubule organizing center"/>
    <property type="evidence" value="ECO:0000250"/>
    <property type="project" value="UniProtKB"/>
</dbReference>
<dbReference type="GO" id="GO:0000776">
    <property type="term" value="C:kinetochore"/>
    <property type="evidence" value="ECO:0000250"/>
    <property type="project" value="UniProtKB"/>
</dbReference>
<dbReference type="GO" id="GO:0030496">
    <property type="term" value="C:midbody"/>
    <property type="evidence" value="ECO:0000250"/>
    <property type="project" value="UniProtKB"/>
</dbReference>
<dbReference type="GO" id="GO:0005634">
    <property type="term" value="C:nucleus"/>
    <property type="evidence" value="ECO:0000250"/>
    <property type="project" value="UniProtKB"/>
</dbReference>
<dbReference type="GO" id="GO:0005876">
    <property type="term" value="C:spindle microtubule"/>
    <property type="evidence" value="ECO:0000250"/>
    <property type="project" value="UniProtKB"/>
</dbReference>
<dbReference type="GO" id="GO:0051233">
    <property type="term" value="C:spindle midzone"/>
    <property type="evidence" value="ECO:0000318"/>
    <property type="project" value="GO_Central"/>
</dbReference>
<dbReference type="GO" id="GO:0004869">
    <property type="term" value="F:cysteine-type endopeptidase inhibitor activity"/>
    <property type="evidence" value="ECO:0007669"/>
    <property type="project" value="UniProtKB-KW"/>
</dbReference>
<dbReference type="GO" id="GO:0043027">
    <property type="term" value="F:cysteine-type endopeptidase inhibitor activity involved in apoptotic process"/>
    <property type="evidence" value="ECO:0000250"/>
    <property type="project" value="UniProtKB"/>
</dbReference>
<dbReference type="GO" id="GO:0008017">
    <property type="term" value="F:microtubule binding"/>
    <property type="evidence" value="ECO:0000250"/>
    <property type="project" value="UniProtKB"/>
</dbReference>
<dbReference type="GO" id="GO:0042803">
    <property type="term" value="F:protein homodimerization activity"/>
    <property type="evidence" value="ECO:0000250"/>
    <property type="project" value="UniProtKB"/>
</dbReference>
<dbReference type="GO" id="GO:0015631">
    <property type="term" value="F:tubulin binding"/>
    <property type="evidence" value="ECO:0000250"/>
    <property type="project" value="UniProtKB"/>
</dbReference>
<dbReference type="GO" id="GO:0008270">
    <property type="term" value="F:zinc ion binding"/>
    <property type="evidence" value="ECO:0000250"/>
    <property type="project" value="UniProtKB"/>
</dbReference>
<dbReference type="GO" id="GO:0006915">
    <property type="term" value="P:apoptotic process"/>
    <property type="evidence" value="ECO:0007669"/>
    <property type="project" value="UniProtKB-KW"/>
</dbReference>
<dbReference type="GO" id="GO:0051301">
    <property type="term" value="P:cell division"/>
    <property type="evidence" value="ECO:0000250"/>
    <property type="project" value="UniProtKB"/>
</dbReference>
<dbReference type="GO" id="GO:0007059">
    <property type="term" value="P:chromosome segregation"/>
    <property type="evidence" value="ECO:0000318"/>
    <property type="project" value="GO_Central"/>
</dbReference>
<dbReference type="GO" id="GO:0051303">
    <property type="term" value="P:establishment of chromosome localization"/>
    <property type="evidence" value="ECO:0000250"/>
    <property type="project" value="UniProtKB"/>
</dbReference>
<dbReference type="GO" id="GO:0000086">
    <property type="term" value="P:G2/M transition of mitotic cell cycle"/>
    <property type="evidence" value="ECO:0000250"/>
    <property type="project" value="UniProtKB"/>
</dbReference>
<dbReference type="GO" id="GO:0000281">
    <property type="term" value="P:mitotic cytokinesis"/>
    <property type="evidence" value="ECO:0000250"/>
    <property type="project" value="UniProtKB"/>
</dbReference>
<dbReference type="GO" id="GO:0007094">
    <property type="term" value="P:mitotic spindle assembly checkpoint signaling"/>
    <property type="evidence" value="ECO:0000250"/>
    <property type="project" value="UniProtKB"/>
</dbReference>
<dbReference type="GO" id="GO:0007052">
    <property type="term" value="P:mitotic spindle organization"/>
    <property type="evidence" value="ECO:0000318"/>
    <property type="project" value="GO_Central"/>
</dbReference>
<dbReference type="GO" id="GO:0043066">
    <property type="term" value="P:negative regulation of apoptotic process"/>
    <property type="evidence" value="ECO:0000250"/>
    <property type="project" value="UniProtKB"/>
</dbReference>
<dbReference type="GO" id="GO:0045892">
    <property type="term" value="P:negative regulation of DNA-templated transcription"/>
    <property type="evidence" value="ECO:0000250"/>
    <property type="project" value="UniProtKB"/>
</dbReference>
<dbReference type="GO" id="GO:0031536">
    <property type="term" value="P:positive regulation of exit from mitosis"/>
    <property type="evidence" value="ECO:0000250"/>
    <property type="project" value="UniProtKB"/>
</dbReference>
<dbReference type="GO" id="GO:0045931">
    <property type="term" value="P:positive regulation of mitotic cell cycle"/>
    <property type="evidence" value="ECO:0000250"/>
    <property type="project" value="UniProtKB"/>
</dbReference>
<dbReference type="GO" id="GO:0031503">
    <property type="term" value="P:protein-containing complex localization"/>
    <property type="evidence" value="ECO:0000250"/>
    <property type="project" value="UniProtKB"/>
</dbReference>
<dbReference type="CDD" id="cd00022">
    <property type="entry name" value="BIR"/>
    <property type="match status" value="1"/>
</dbReference>
<dbReference type="FunFam" id="1.10.1170.10:FF:000009">
    <property type="entry name" value="Baculoviral IAP repeat-containing protein 5"/>
    <property type="match status" value="1"/>
</dbReference>
<dbReference type="Gene3D" id="1.10.1170.10">
    <property type="entry name" value="Inhibitor Of Apoptosis Protein (2mihbC-IAP-1), Chain A"/>
    <property type="match status" value="1"/>
</dbReference>
<dbReference type="InterPro" id="IPR051190">
    <property type="entry name" value="Baculoviral_IAP"/>
</dbReference>
<dbReference type="InterPro" id="IPR001370">
    <property type="entry name" value="BIR_rpt"/>
</dbReference>
<dbReference type="PANTHER" id="PTHR46771:SF3">
    <property type="entry name" value="BACULOVIRAL IAP REPEAT-CONTAINING PROTEIN 5"/>
    <property type="match status" value="1"/>
</dbReference>
<dbReference type="PANTHER" id="PTHR46771">
    <property type="entry name" value="DETERIN"/>
    <property type="match status" value="1"/>
</dbReference>
<dbReference type="Pfam" id="PF00653">
    <property type="entry name" value="BIR"/>
    <property type="match status" value="1"/>
</dbReference>
<dbReference type="SMART" id="SM00238">
    <property type="entry name" value="BIR"/>
    <property type="match status" value="1"/>
</dbReference>
<dbReference type="SUPFAM" id="SSF57924">
    <property type="entry name" value="Inhibitor of apoptosis (IAP) repeat"/>
    <property type="match status" value="1"/>
</dbReference>
<dbReference type="PROSITE" id="PS50143">
    <property type="entry name" value="BIR_REPEAT_2"/>
    <property type="match status" value="1"/>
</dbReference>